<keyword id="KW-0002">3D-structure</keyword>
<keyword id="KW-0007">Acetylation</keyword>
<keyword id="KW-0025">Alternative splicing</keyword>
<keyword id="KW-1017">Isopeptide bond</keyword>
<keyword id="KW-0479">Metal-binding</keyword>
<keyword id="KW-0524">Neurogenesis</keyword>
<keyword id="KW-0539">Nucleus</keyword>
<keyword id="KW-0597">Phosphoprotein</keyword>
<keyword id="KW-1267">Proteomics identification</keyword>
<keyword id="KW-1185">Reference proteome</keyword>
<keyword id="KW-0677">Repeat</keyword>
<keyword id="KW-0804">Transcription</keyword>
<keyword id="KW-0805">Transcription regulation</keyword>
<keyword id="KW-0832">Ubl conjugation</keyword>
<keyword id="KW-0862">Zinc</keyword>
<keyword id="KW-0863">Zinc-finger</keyword>
<comment type="function">
    <text evidence="1">Involved in transcription activity regulation by chromatin remodeling. Belongs to the neural progenitors-specific chromatin remodeling complex (npBAF complex) and is required for the proliferation of neural progenitors. During neural development a switch from a stem/progenitor to a post-mitotic chromatin remodeling mechanism occurs as neurons exit the cell cycle and become committed to their adult state. The transition from proliferating neural stem/progenitor cells to post-mitotic neurons requires a switch in subunit composition of the npBAF and nBAF complexes. As neural progenitors exit mitosis and differentiate into neurons, npBAF complexes which contain ACTL6A/BAF53A and PHF10/BAF45A, are exchanged for homologous alternative ACTL6B/BAF53B and DPF1/BAF45B or DPF3/BAF45C subunits in neuron-specific complexes (nBAF). The npBAF complex is essential for the self-renewal/proliferative capacity of the multipotent neural stem cells. The nBAF complex along with CREST plays a role regulating the activity of genes essential for dendrite growth (By similarity).</text>
</comment>
<comment type="subunit">
    <text evidence="1">Component of neural progenitors-specific chromatin remodeling complex (npBAF complex) composed of at least, ARID1A/BAF250A or ARID1B/BAF250B, SMARCD1/BAF60A, SMARCD3/BAF60C, SMARCA2/BRM/BAF190B, SMARCA4/BRG1/BAF190A, SMARCB1/BAF47, SMARCC1/BAF155, SMARCE1/BAF57, SMARCC2/BAF170, PHF10/BAF45A, ACTL6A/BAF53A and actin. Interacts with ACTL6A/BAF53A, SMARCA2/BRM/BAF190B, SMARCA4/BRG1/BAF190A and PBRM1/BAF180 (By similarity).</text>
</comment>
<comment type="interaction">
    <interactant intactId="EBI-10276329">
        <id>Q8WUB8-2</id>
    </interactant>
    <interactant intactId="EBI-77613">
        <id>P05067</id>
        <label>APP</label>
    </interactant>
    <organismsDiffer>false</organismsDiffer>
    <experiments>3</experiments>
</comment>
<comment type="interaction">
    <interactant intactId="EBI-10276329">
        <id>Q8WUB8-2</id>
    </interactant>
    <interactant intactId="EBI-739909">
        <id>Q969R5</id>
        <label>L3MBTL2</label>
    </interactant>
    <organismsDiffer>false</organismsDiffer>
    <experiments>6</experiments>
</comment>
<comment type="subcellular location">
    <subcellularLocation>
        <location evidence="1">Nucleus</location>
    </subcellularLocation>
</comment>
<comment type="alternative products">
    <event type="alternative splicing"/>
    <isoform>
        <id>Q8WUB8-1</id>
        <name>1</name>
        <sequence type="displayed"/>
    </isoform>
    <isoform>
        <id>Q8WUB8-2</id>
        <name>2</name>
        <name>B</name>
        <sequence type="described" ref="VSP_013440"/>
    </isoform>
    <isoform>
        <id>Q8WUB8-3</id>
        <name>3</name>
        <sequence type="described" ref="VSP_039090"/>
    </isoform>
</comment>
<comment type="similarity">
    <text evidence="7">Belongs to the SAYP family.</text>
</comment>
<comment type="caution">
    <text evidence="7">It is uncertain whether Met-1 or Met-89 is the initiator.</text>
</comment>
<comment type="sequence caution" evidence="7">
    <conflict type="erroneous initiation">
        <sequence resource="EMBL-CDS" id="AAH20954"/>
    </conflict>
    <text>Truncated N-terminus.</text>
</comment>
<comment type="sequence caution" evidence="7">
    <conflict type="erroneous initiation">
        <sequence resource="EMBL-CDS" id="AAI10324"/>
    </conflict>
    <text>Truncated N-terminus.</text>
</comment>
<comment type="sequence caution" evidence="7">
    <conflict type="erroneous gene model prediction">
        <sequence resource="EMBL-CDS" id="AAK27451"/>
    </conflict>
</comment>
<comment type="sequence caution" evidence="7">
    <conflict type="erroneous initiation">
        <sequence resource="EMBL-CDS" id="BAA91934"/>
    </conflict>
    <text>Truncated N-terminus.</text>
</comment>
<comment type="sequence caution" evidence="7">
    <conflict type="erroneous initiation">
        <sequence resource="EMBL-CDS" id="BAD96332"/>
    </conflict>
    <text>Truncated N-terminus.</text>
</comment>
<comment type="sequence caution" evidence="7">
    <conflict type="erroneous initiation">
        <sequence resource="EMBL-CDS" id="CAG33554"/>
    </conflict>
    <text>Truncated N-terminus.</text>
</comment>
<gene>
    <name type="primary">PHF10</name>
    <name type="synonym">BAF45A</name>
</gene>
<organism>
    <name type="scientific">Homo sapiens</name>
    <name type="common">Human</name>
    <dbReference type="NCBI Taxonomy" id="9606"/>
    <lineage>
        <taxon>Eukaryota</taxon>
        <taxon>Metazoa</taxon>
        <taxon>Chordata</taxon>
        <taxon>Craniata</taxon>
        <taxon>Vertebrata</taxon>
        <taxon>Euteleostomi</taxon>
        <taxon>Mammalia</taxon>
        <taxon>Eutheria</taxon>
        <taxon>Euarchontoglires</taxon>
        <taxon>Primates</taxon>
        <taxon>Haplorrhini</taxon>
        <taxon>Catarrhini</taxon>
        <taxon>Hominidae</taxon>
        <taxon>Homo</taxon>
    </lineage>
</organism>
<dbReference type="EMBL" id="AL513547">
    <property type="status" value="NOT_ANNOTATED_CDS"/>
    <property type="molecule type" value="Genomic_DNA"/>
</dbReference>
<dbReference type="EMBL" id="BC020954">
    <property type="protein sequence ID" value="AAH20954.1"/>
    <property type="status" value="ALT_INIT"/>
    <property type="molecule type" value="mRNA"/>
</dbReference>
<dbReference type="EMBL" id="BC110323">
    <property type="protein sequence ID" value="AAI10324.1"/>
    <property type="status" value="ALT_INIT"/>
    <property type="molecule type" value="mRNA"/>
</dbReference>
<dbReference type="EMBL" id="AF338735">
    <property type="protein sequence ID" value="AAK27451.1"/>
    <property type="status" value="ALT_SEQ"/>
    <property type="molecule type" value="Genomic_DNA"/>
</dbReference>
<dbReference type="EMBL" id="AK001837">
    <property type="protein sequence ID" value="BAA91934.1"/>
    <property type="status" value="ALT_INIT"/>
    <property type="molecule type" value="mRNA"/>
</dbReference>
<dbReference type="EMBL" id="CR457273">
    <property type="protein sequence ID" value="CAG33554.1"/>
    <property type="status" value="ALT_INIT"/>
    <property type="molecule type" value="mRNA"/>
</dbReference>
<dbReference type="EMBL" id="AK222612">
    <property type="protein sequence ID" value="BAD96332.1"/>
    <property type="status" value="ALT_INIT"/>
    <property type="molecule type" value="mRNA"/>
</dbReference>
<dbReference type="CCDS" id="CCDS5308.2">
    <molecule id="Q8WUB8-1"/>
</dbReference>
<dbReference type="CCDS" id="CCDS5309.2">
    <molecule id="Q8WUB8-2"/>
</dbReference>
<dbReference type="RefSeq" id="NP_060758.2">
    <molecule id="Q8WUB8-1"/>
    <property type="nucleotide sequence ID" value="NM_018288.4"/>
</dbReference>
<dbReference type="RefSeq" id="NP_579866.2">
    <molecule id="Q8WUB8-2"/>
    <property type="nucleotide sequence ID" value="NM_133325.3"/>
</dbReference>
<dbReference type="PDB" id="7VDV">
    <property type="method" value="EM"/>
    <property type="resolution" value="3.40 A"/>
    <property type="chains" value="R=1-498"/>
</dbReference>
<dbReference type="PDB" id="7Y8R">
    <property type="method" value="EM"/>
    <property type="resolution" value="4.40 A"/>
    <property type="chains" value="R=1-498"/>
</dbReference>
<dbReference type="PDBsum" id="7VDV"/>
<dbReference type="PDBsum" id="7Y8R"/>
<dbReference type="EMDB" id="EMD-31926"/>
<dbReference type="EMDB" id="EMD-33684"/>
<dbReference type="SMR" id="Q8WUB8"/>
<dbReference type="BioGRID" id="120562">
    <property type="interactions" value="146"/>
</dbReference>
<dbReference type="ComplexPortal" id="CPX-1195">
    <property type="entry name" value="Embryonic stem cell-specific SWI/SNF ATP-dependent chromatin remodeling complex"/>
</dbReference>
<dbReference type="ComplexPortal" id="CPX-1196">
    <property type="entry name" value="Polybromo-associated SWI/SNF ATP-dependent chromatin remodeling complex, ACTL6B variant"/>
</dbReference>
<dbReference type="ComplexPortal" id="CPX-1199">
    <property type="entry name" value="Polybromo-associated SWI/SNF ATP-dependent chromatin remodeling complex, ACTL6A variant"/>
</dbReference>
<dbReference type="ComplexPortal" id="CPX-1201">
    <property type="entry name" value="Neural progenitor-specific SWI/SNF ATP-dependent chromatin remodeling complex, ARID1A-SMARCA2 variant"/>
</dbReference>
<dbReference type="ComplexPortal" id="CPX-1212">
    <property type="entry name" value="Neural progenitor-specific SWI/SNF ATP-dependent chromatin remodeling complex, ARID1A-SMARCA4 variant"/>
</dbReference>
<dbReference type="ComplexPortal" id="CPX-1213">
    <property type="entry name" value="Neural progenitor-specific SWI/SNF ATP-dependent chromatin remodeling complex, ARID1B-SMARCA2 variant"/>
</dbReference>
<dbReference type="ComplexPortal" id="CPX-1215">
    <property type="entry name" value="Neural progenitor-specific SWI/SNF ATP-dependent chromatin remodeling complex, ARID1B-SMARCA4 variant"/>
</dbReference>
<dbReference type="CORUM" id="Q8WUB8"/>
<dbReference type="FunCoup" id="Q8WUB8">
    <property type="interactions" value="1634"/>
</dbReference>
<dbReference type="IntAct" id="Q8WUB8">
    <property type="interactions" value="106"/>
</dbReference>
<dbReference type="MINT" id="Q8WUB8"/>
<dbReference type="STRING" id="9606.ENSP00000341805"/>
<dbReference type="GlyGen" id="Q8WUB8">
    <property type="glycosylation" value="2 sites"/>
</dbReference>
<dbReference type="iPTMnet" id="Q8WUB8"/>
<dbReference type="MetOSite" id="Q8WUB8"/>
<dbReference type="PhosphoSitePlus" id="Q8WUB8"/>
<dbReference type="BioMuta" id="PHF10"/>
<dbReference type="DMDM" id="296439276"/>
<dbReference type="jPOST" id="Q8WUB8"/>
<dbReference type="MassIVE" id="Q8WUB8"/>
<dbReference type="PaxDb" id="9606-ENSP00000341805"/>
<dbReference type="PeptideAtlas" id="Q8WUB8"/>
<dbReference type="ProteomicsDB" id="74654">
    <molecule id="Q8WUB8-1"/>
</dbReference>
<dbReference type="ProteomicsDB" id="74655">
    <molecule id="Q8WUB8-2"/>
</dbReference>
<dbReference type="ProteomicsDB" id="74656">
    <molecule id="Q8WUB8-3"/>
</dbReference>
<dbReference type="Pumba" id="Q8WUB8"/>
<dbReference type="Antibodypedia" id="33573">
    <property type="antibodies" value="93 antibodies from 21 providers"/>
</dbReference>
<dbReference type="DNASU" id="55274"/>
<dbReference type="Ensembl" id="ENST00000339209.9">
    <molecule id="Q8WUB8-1"/>
    <property type="protein sequence ID" value="ENSP00000341805.4"/>
    <property type="gene ID" value="ENSG00000130024.15"/>
</dbReference>
<dbReference type="Ensembl" id="ENST00000366780.8">
    <molecule id="Q8WUB8-2"/>
    <property type="protein sequence ID" value="ENSP00000355743.4"/>
    <property type="gene ID" value="ENSG00000130024.15"/>
</dbReference>
<dbReference type="Ensembl" id="ENST00000621772.4">
    <molecule id="Q8WUB8-3"/>
    <property type="protein sequence ID" value="ENSP00000484117.1"/>
    <property type="gene ID" value="ENSG00000130024.15"/>
</dbReference>
<dbReference type="GeneID" id="55274"/>
<dbReference type="KEGG" id="hsa:55274"/>
<dbReference type="MANE-Select" id="ENST00000339209.9">
    <property type="protein sequence ID" value="ENSP00000341805.4"/>
    <property type="RefSeq nucleotide sequence ID" value="NM_018288.4"/>
    <property type="RefSeq protein sequence ID" value="NP_060758.2"/>
</dbReference>
<dbReference type="UCSC" id="uc011egy.3">
    <molecule id="Q8WUB8-1"/>
    <property type="organism name" value="human"/>
</dbReference>
<dbReference type="AGR" id="HGNC:18250"/>
<dbReference type="CTD" id="55274"/>
<dbReference type="DisGeNET" id="55274"/>
<dbReference type="GeneCards" id="PHF10"/>
<dbReference type="HGNC" id="HGNC:18250">
    <property type="gene designation" value="PHF10"/>
</dbReference>
<dbReference type="HPA" id="ENSG00000130024">
    <property type="expression patterns" value="Low tissue specificity"/>
</dbReference>
<dbReference type="MIM" id="613069">
    <property type="type" value="gene"/>
</dbReference>
<dbReference type="neXtProt" id="NX_Q8WUB8"/>
<dbReference type="OpenTargets" id="ENSG00000130024"/>
<dbReference type="PharmGKB" id="PA134972675"/>
<dbReference type="VEuPathDB" id="HostDB:ENSG00000130024"/>
<dbReference type="eggNOG" id="KOG1512">
    <property type="taxonomic scope" value="Eukaryota"/>
</dbReference>
<dbReference type="GeneTree" id="ENSGT00940000155172"/>
<dbReference type="HOGENOM" id="CLU_028634_2_0_1"/>
<dbReference type="InParanoid" id="Q8WUB8"/>
<dbReference type="OMA" id="EKHREYA"/>
<dbReference type="OrthoDB" id="1903104at2759"/>
<dbReference type="PAN-GO" id="Q8WUB8">
    <property type="GO annotations" value="4 GO annotations based on evolutionary models"/>
</dbReference>
<dbReference type="PhylomeDB" id="Q8WUB8"/>
<dbReference type="TreeFam" id="TF318971"/>
<dbReference type="PathwayCommons" id="Q8WUB8"/>
<dbReference type="SignaLink" id="Q8WUB8"/>
<dbReference type="SIGNOR" id="Q8WUB8"/>
<dbReference type="BioGRID-ORCS" id="55274">
    <property type="hits" value="31 hits in 1156 CRISPR screens"/>
</dbReference>
<dbReference type="ChiTaRS" id="PHF10">
    <property type="organism name" value="human"/>
</dbReference>
<dbReference type="GeneWiki" id="PHF10"/>
<dbReference type="GenomeRNAi" id="55274"/>
<dbReference type="Pharos" id="Q8WUB8">
    <property type="development level" value="Tbio"/>
</dbReference>
<dbReference type="PRO" id="PR:Q8WUB8"/>
<dbReference type="Proteomes" id="UP000005640">
    <property type="component" value="Chromosome 6"/>
</dbReference>
<dbReference type="RNAct" id="Q8WUB8">
    <property type="molecule type" value="protein"/>
</dbReference>
<dbReference type="Bgee" id="ENSG00000130024">
    <property type="expression patterns" value="Expressed in adrenal tissue and 203 other cell types or tissues"/>
</dbReference>
<dbReference type="ExpressionAtlas" id="Q8WUB8">
    <property type="expression patterns" value="baseline and differential"/>
</dbReference>
<dbReference type="GO" id="GO:0000785">
    <property type="term" value="C:chromatin"/>
    <property type="evidence" value="ECO:0000318"/>
    <property type="project" value="GO_Central"/>
</dbReference>
<dbReference type="GO" id="GO:0000776">
    <property type="term" value="C:kinetochore"/>
    <property type="evidence" value="ECO:0000303"/>
    <property type="project" value="ComplexPortal"/>
</dbReference>
<dbReference type="GO" id="GO:0071564">
    <property type="term" value="C:npBAF complex"/>
    <property type="evidence" value="ECO:0000250"/>
    <property type="project" value="UniProtKB"/>
</dbReference>
<dbReference type="GO" id="GO:0016363">
    <property type="term" value="C:nuclear matrix"/>
    <property type="evidence" value="ECO:0000303"/>
    <property type="project" value="ComplexPortal"/>
</dbReference>
<dbReference type="GO" id="GO:0005654">
    <property type="term" value="C:nucleoplasm"/>
    <property type="evidence" value="ECO:0000314"/>
    <property type="project" value="HPA"/>
</dbReference>
<dbReference type="GO" id="GO:0005634">
    <property type="term" value="C:nucleus"/>
    <property type="evidence" value="ECO:0000318"/>
    <property type="project" value="GO_Central"/>
</dbReference>
<dbReference type="GO" id="GO:0016586">
    <property type="term" value="C:RSC-type complex"/>
    <property type="evidence" value="ECO:0000303"/>
    <property type="project" value="ComplexPortal"/>
</dbReference>
<dbReference type="GO" id="GO:0016514">
    <property type="term" value="C:SWI/SNF complex"/>
    <property type="evidence" value="ECO:0000303"/>
    <property type="project" value="ComplexPortal"/>
</dbReference>
<dbReference type="GO" id="GO:0003682">
    <property type="term" value="F:chromatin binding"/>
    <property type="evidence" value="ECO:0000318"/>
    <property type="project" value="GO_Central"/>
</dbReference>
<dbReference type="GO" id="GO:0004402">
    <property type="term" value="F:histone acetyltransferase activity"/>
    <property type="evidence" value="ECO:0000318"/>
    <property type="project" value="GO_Central"/>
</dbReference>
<dbReference type="GO" id="GO:0003712">
    <property type="term" value="F:transcription coregulator activity"/>
    <property type="evidence" value="ECO:0000318"/>
    <property type="project" value="GO_Central"/>
</dbReference>
<dbReference type="GO" id="GO:0008270">
    <property type="term" value="F:zinc ion binding"/>
    <property type="evidence" value="ECO:0007669"/>
    <property type="project" value="UniProtKB-KW"/>
</dbReference>
<dbReference type="GO" id="GO:0006338">
    <property type="term" value="P:chromatin remodeling"/>
    <property type="evidence" value="ECO:0000303"/>
    <property type="project" value="ComplexPortal"/>
</dbReference>
<dbReference type="GO" id="GO:0007399">
    <property type="term" value="P:nervous system development"/>
    <property type="evidence" value="ECO:0007669"/>
    <property type="project" value="UniProtKB-KW"/>
</dbReference>
<dbReference type="GO" id="GO:0045597">
    <property type="term" value="P:positive regulation of cell differentiation"/>
    <property type="evidence" value="ECO:0000303"/>
    <property type="project" value="ComplexPortal"/>
</dbReference>
<dbReference type="GO" id="GO:2000781">
    <property type="term" value="P:positive regulation of double-strand break repair"/>
    <property type="evidence" value="ECO:0000303"/>
    <property type="project" value="ComplexPortal"/>
</dbReference>
<dbReference type="GO" id="GO:0045663">
    <property type="term" value="P:positive regulation of myoblast differentiation"/>
    <property type="evidence" value="ECO:0000303"/>
    <property type="project" value="ComplexPortal"/>
</dbReference>
<dbReference type="GO" id="GO:1902459">
    <property type="term" value="P:positive regulation of stem cell population maintenance"/>
    <property type="evidence" value="ECO:0000303"/>
    <property type="project" value="ComplexPortal"/>
</dbReference>
<dbReference type="GO" id="GO:0045582">
    <property type="term" value="P:positive regulation of T cell differentiation"/>
    <property type="evidence" value="ECO:0000303"/>
    <property type="project" value="ComplexPortal"/>
</dbReference>
<dbReference type="GO" id="GO:0070316">
    <property type="term" value="P:regulation of G0 to G1 transition"/>
    <property type="evidence" value="ECO:0000303"/>
    <property type="project" value="ComplexPortal"/>
</dbReference>
<dbReference type="GO" id="GO:2000045">
    <property type="term" value="P:regulation of G1/S transition of mitotic cell cycle"/>
    <property type="evidence" value="ECO:0000303"/>
    <property type="project" value="ComplexPortal"/>
</dbReference>
<dbReference type="GO" id="GO:0030071">
    <property type="term" value="P:regulation of mitotic metaphase/anaphase transition"/>
    <property type="evidence" value="ECO:0000303"/>
    <property type="project" value="ComplexPortal"/>
</dbReference>
<dbReference type="GO" id="GO:2000819">
    <property type="term" value="P:regulation of nucleotide-excision repair"/>
    <property type="evidence" value="ECO:0000303"/>
    <property type="project" value="ComplexPortal"/>
</dbReference>
<dbReference type="GO" id="GO:0006357">
    <property type="term" value="P:regulation of transcription by RNA polymerase II"/>
    <property type="evidence" value="ECO:0000318"/>
    <property type="project" value="GO_Central"/>
</dbReference>
<dbReference type="CDD" id="cd15528">
    <property type="entry name" value="PHD1_PHF10"/>
    <property type="match status" value="1"/>
</dbReference>
<dbReference type="CDD" id="cd15529">
    <property type="entry name" value="PHD2_PHF10"/>
    <property type="match status" value="1"/>
</dbReference>
<dbReference type="CDD" id="cd21085">
    <property type="entry name" value="WH_NTD_PHF10"/>
    <property type="match status" value="1"/>
</dbReference>
<dbReference type="FunFam" id="3.30.40.10:FF:000202">
    <property type="entry name" value="PHD finger protein 10 isoform X1"/>
    <property type="match status" value="1"/>
</dbReference>
<dbReference type="Gene3D" id="3.30.40.10">
    <property type="entry name" value="Zinc/RING finger domain, C3HC4 (zinc finger)"/>
    <property type="match status" value="1"/>
</dbReference>
<dbReference type="InterPro" id="IPR038045">
    <property type="entry name" value="PHF10_PHD_finger_1"/>
</dbReference>
<dbReference type="InterPro" id="IPR011011">
    <property type="entry name" value="Znf_FYVE_PHD"/>
</dbReference>
<dbReference type="InterPro" id="IPR001965">
    <property type="entry name" value="Znf_PHD"/>
</dbReference>
<dbReference type="InterPro" id="IPR019787">
    <property type="entry name" value="Znf_PHD-finger"/>
</dbReference>
<dbReference type="InterPro" id="IPR013083">
    <property type="entry name" value="Znf_RING/FYVE/PHD"/>
</dbReference>
<dbReference type="PANTHER" id="PTHR45888">
    <property type="entry name" value="HL01030P-RELATED"/>
    <property type="match status" value="1"/>
</dbReference>
<dbReference type="PANTHER" id="PTHR45888:SF4">
    <property type="entry name" value="PHD FINGER PROTEIN 10"/>
    <property type="match status" value="1"/>
</dbReference>
<dbReference type="Pfam" id="PF00628">
    <property type="entry name" value="PHD"/>
    <property type="match status" value="2"/>
</dbReference>
<dbReference type="SMART" id="SM00249">
    <property type="entry name" value="PHD"/>
    <property type="match status" value="2"/>
</dbReference>
<dbReference type="SUPFAM" id="SSF57903">
    <property type="entry name" value="FYVE/PHD zinc finger"/>
    <property type="match status" value="2"/>
</dbReference>
<dbReference type="PROSITE" id="PS01359">
    <property type="entry name" value="ZF_PHD_1"/>
    <property type="match status" value="1"/>
</dbReference>
<dbReference type="PROSITE" id="PS50016">
    <property type="entry name" value="ZF_PHD_2"/>
    <property type="match status" value="2"/>
</dbReference>
<name>PHF10_HUMAN</name>
<reference key="1">
    <citation type="journal article" date="2009" name="Cytogenet. Genome Res.">
        <title>PHF10 is required for cell proliferation in normal and SV40-immortalized human fibroblast cells.</title>
        <authorList>
            <person name="Banga S.S."/>
            <person name="Peng L."/>
            <person name="Dasgupta T."/>
            <person name="Palejwala V."/>
            <person name="Ozer H.L."/>
        </authorList>
    </citation>
    <scope>NUCLEOTIDE SEQUENCE [MRNA] (ISOFORM 3)</scope>
</reference>
<reference key="2">
    <citation type="journal article" date="2003" name="Nature">
        <title>The DNA sequence and analysis of human chromosome 6.</title>
        <authorList>
            <person name="Mungall A.J."/>
            <person name="Palmer S.A."/>
            <person name="Sims S.K."/>
            <person name="Edwards C.A."/>
            <person name="Ashurst J.L."/>
            <person name="Wilming L."/>
            <person name="Jones M.C."/>
            <person name="Horton R."/>
            <person name="Hunt S.E."/>
            <person name="Scott C.E."/>
            <person name="Gilbert J.G.R."/>
            <person name="Clamp M.E."/>
            <person name="Bethel G."/>
            <person name="Milne S."/>
            <person name="Ainscough R."/>
            <person name="Almeida J.P."/>
            <person name="Ambrose K.D."/>
            <person name="Andrews T.D."/>
            <person name="Ashwell R.I.S."/>
            <person name="Babbage A.K."/>
            <person name="Bagguley C.L."/>
            <person name="Bailey J."/>
            <person name="Banerjee R."/>
            <person name="Barker D.J."/>
            <person name="Barlow K.F."/>
            <person name="Bates K."/>
            <person name="Beare D.M."/>
            <person name="Beasley H."/>
            <person name="Beasley O."/>
            <person name="Bird C.P."/>
            <person name="Blakey S.E."/>
            <person name="Bray-Allen S."/>
            <person name="Brook J."/>
            <person name="Brown A.J."/>
            <person name="Brown J.Y."/>
            <person name="Burford D.C."/>
            <person name="Burrill W."/>
            <person name="Burton J."/>
            <person name="Carder C."/>
            <person name="Carter N.P."/>
            <person name="Chapman J.C."/>
            <person name="Clark S.Y."/>
            <person name="Clark G."/>
            <person name="Clee C.M."/>
            <person name="Clegg S."/>
            <person name="Cobley V."/>
            <person name="Collier R.E."/>
            <person name="Collins J.E."/>
            <person name="Colman L.K."/>
            <person name="Corby N.R."/>
            <person name="Coville G.J."/>
            <person name="Culley K.M."/>
            <person name="Dhami P."/>
            <person name="Davies J."/>
            <person name="Dunn M."/>
            <person name="Earthrowl M.E."/>
            <person name="Ellington A.E."/>
            <person name="Evans K.A."/>
            <person name="Faulkner L."/>
            <person name="Francis M.D."/>
            <person name="Frankish A."/>
            <person name="Frankland J."/>
            <person name="French L."/>
            <person name="Garner P."/>
            <person name="Garnett J."/>
            <person name="Ghori M.J."/>
            <person name="Gilby L.M."/>
            <person name="Gillson C.J."/>
            <person name="Glithero R.J."/>
            <person name="Grafham D.V."/>
            <person name="Grant M."/>
            <person name="Gribble S."/>
            <person name="Griffiths C."/>
            <person name="Griffiths M.N.D."/>
            <person name="Hall R."/>
            <person name="Halls K.S."/>
            <person name="Hammond S."/>
            <person name="Harley J.L."/>
            <person name="Hart E.A."/>
            <person name="Heath P.D."/>
            <person name="Heathcott R."/>
            <person name="Holmes S.J."/>
            <person name="Howden P.J."/>
            <person name="Howe K.L."/>
            <person name="Howell G.R."/>
            <person name="Huckle E."/>
            <person name="Humphray S.J."/>
            <person name="Humphries M.D."/>
            <person name="Hunt A.R."/>
            <person name="Johnson C.M."/>
            <person name="Joy A.A."/>
            <person name="Kay M."/>
            <person name="Keenan S.J."/>
            <person name="Kimberley A.M."/>
            <person name="King A."/>
            <person name="Laird G.K."/>
            <person name="Langford C."/>
            <person name="Lawlor S."/>
            <person name="Leongamornlert D.A."/>
            <person name="Leversha M."/>
            <person name="Lloyd C.R."/>
            <person name="Lloyd D.M."/>
            <person name="Loveland J.E."/>
            <person name="Lovell J."/>
            <person name="Martin S."/>
            <person name="Mashreghi-Mohammadi M."/>
            <person name="Maslen G.L."/>
            <person name="Matthews L."/>
            <person name="McCann O.T."/>
            <person name="McLaren S.J."/>
            <person name="McLay K."/>
            <person name="McMurray A."/>
            <person name="Moore M.J.F."/>
            <person name="Mullikin J.C."/>
            <person name="Niblett D."/>
            <person name="Nickerson T."/>
            <person name="Novik K.L."/>
            <person name="Oliver K."/>
            <person name="Overton-Larty E.K."/>
            <person name="Parker A."/>
            <person name="Patel R."/>
            <person name="Pearce A.V."/>
            <person name="Peck A.I."/>
            <person name="Phillimore B.J.C.T."/>
            <person name="Phillips S."/>
            <person name="Plumb R.W."/>
            <person name="Porter K.M."/>
            <person name="Ramsey Y."/>
            <person name="Ranby S.A."/>
            <person name="Rice C.M."/>
            <person name="Ross M.T."/>
            <person name="Searle S.M."/>
            <person name="Sehra H.K."/>
            <person name="Sheridan E."/>
            <person name="Skuce C.D."/>
            <person name="Smith S."/>
            <person name="Smith M."/>
            <person name="Spraggon L."/>
            <person name="Squares S.L."/>
            <person name="Steward C.A."/>
            <person name="Sycamore N."/>
            <person name="Tamlyn-Hall G."/>
            <person name="Tester J."/>
            <person name="Theaker A.J."/>
            <person name="Thomas D.W."/>
            <person name="Thorpe A."/>
            <person name="Tracey A."/>
            <person name="Tromans A."/>
            <person name="Tubby B."/>
            <person name="Wall M."/>
            <person name="Wallis J.M."/>
            <person name="West A.P."/>
            <person name="White S.S."/>
            <person name="Whitehead S.L."/>
            <person name="Whittaker H."/>
            <person name="Wild A."/>
            <person name="Willey D.J."/>
            <person name="Wilmer T.E."/>
            <person name="Wood J.M."/>
            <person name="Wray P.W."/>
            <person name="Wyatt J.C."/>
            <person name="Young L."/>
            <person name="Younger R.M."/>
            <person name="Bentley D.R."/>
            <person name="Coulson A."/>
            <person name="Durbin R.M."/>
            <person name="Hubbard T."/>
            <person name="Sulston J.E."/>
            <person name="Dunham I."/>
            <person name="Rogers J."/>
            <person name="Beck S."/>
        </authorList>
    </citation>
    <scope>NUCLEOTIDE SEQUENCE [LARGE SCALE GENOMIC DNA]</scope>
</reference>
<reference key="3">
    <citation type="journal article" date="2004" name="Genome Res.">
        <title>The status, quality, and expansion of the NIH full-length cDNA project: the Mammalian Gene Collection (MGC).</title>
        <authorList>
            <consortium name="The MGC Project Team"/>
        </authorList>
    </citation>
    <scope>NUCLEOTIDE SEQUENCE [LARGE SCALE MRNA] (ISOFORMS 1 AND 2)</scope>
    <source>
        <tissue>Colon</tissue>
        <tissue>Skin</tissue>
    </source>
</reference>
<reference key="4">
    <citation type="journal article" date="2002" name="Genomics">
        <title>Physical and genetic characterization reveals a pseudogene, an evolutionary junction, and unstable loci in distal Xq28.</title>
        <authorList>
            <person name="Aradhya S."/>
            <person name="Woffendin H."/>
            <person name="Bonnen P."/>
            <person name="Heiss N.S."/>
            <person name="Yamagata T."/>
            <person name="Esposito T."/>
            <person name="Bardaro T."/>
            <person name="Poustka A."/>
            <person name="D'Urso M."/>
            <person name="Kenwrick S."/>
            <person name="Nelson D.L."/>
        </authorList>
    </citation>
    <scope>NUCLEOTIDE SEQUENCE [GENOMIC DNA] OF 73-498 (ISOFORM 1)</scope>
    <scope>ALTERNATIVE SPLICING</scope>
</reference>
<reference key="5">
    <citation type="journal article" date="2004" name="Nat. Genet.">
        <title>Complete sequencing and characterization of 21,243 full-length human cDNAs.</title>
        <authorList>
            <person name="Ota T."/>
            <person name="Suzuki Y."/>
            <person name="Nishikawa T."/>
            <person name="Otsuki T."/>
            <person name="Sugiyama T."/>
            <person name="Irie R."/>
            <person name="Wakamatsu A."/>
            <person name="Hayashi K."/>
            <person name="Sato H."/>
            <person name="Nagai K."/>
            <person name="Kimura K."/>
            <person name="Makita H."/>
            <person name="Sekine M."/>
            <person name="Obayashi M."/>
            <person name="Nishi T."/>
            <person name="Shibahara T."/>
            <person name="Tanaka T."/>
            <person name="Ishii S."/>
            <person name="Yamamoto J."/>
            <person name="Saito K."/>
            <person name="Kawai Y."/>
            <person name="Isono Y."/>
            <person name="Nakamura Y."/>
            <person name="Nagahari K."/>
            <person name="Murakami K."/>
            <person name="Yasuda T."/>
            <person name="Iwayanagi T."/>
            <person name="Wagatsuma M."/>
            <person name="Shiratori A."/>
            <person name="Sudo H."/>
            <person name="Hosoiri T."/>
            <person name="Kaku Y."/>
            <person name="Kodaira H."/>
            <person name="Kondo H."/>
            <person name="Sugawara M."/>
            <person name="Takahashi M."/>
            <person name="Kanda K."/>
            <person name="Yokoi T."/>
            <person name="Furuya T."/>
            <person name="Kikkawa E."/>
            <person name="Omura Y."/>
            <person name="Abe K."/>
            <person name="Kamihara K."/>
            <person name="Katsuta N."/>
            <person name="Sato K."/>
            <person name="Tanikawa M."/>
            <person name="Yamazaki M."/>
            <person name="Ninomiya K."/>
            <person name="Ishibashi T."/>
            <person name="Yamashita H."/>
            <person name="Murakawa K."/>
            <person name="Fujimori K."/>
            <person name="Tanai H."/>
            <person name="Kimata M."/>
            <person name="Watanabe M."/>
            <person name="Hiraoka S."/>
            <person name="Chiba Y."/>
            <person name="Ishida S."/>
            <person name="Ono Y."/>
            <person name="Takiguchi S."/>
            <person name="Watanabe S."/>
            <person name="Yosida M."/>
            <person name="Hotuta T."/>
            <person name="Kusano J."/>
            <person name="Kanehori K."/>
            <person name="Takahashi-Fujii A."/>
            <person name="Hara H."/>
            <person name="Tanase T.-O."/>
            <person name="Nomura Y."/>
            <person name="Togiya S."/>
            <person name="Komai F."/>
            <person name="Hara R."/>
            <person name="Takeuchi K."/>
            <person name="Arita M."/>
            <person name="Imose N."/>
            <person name="Musashino K."/>
            <person name="Yuuki H."/>
            <person name="Oshima A."/>
            <person name="Sasaki N."/>
            <person name="Aotsuka S."/>
            <person name="Yoshikawa Y."/>
            <person name="Matsunawa H."/>
            <person name="Ichihara T."/>
            <person name="Shiohata N."/>
            <person name="Sano S."/>
            <person name="Moriya S."/>
            <person name="Momiyama H."/>
            <person name="Satoh N."/>
            <person name="Takami S."/>
            <person name="Terashima Y."/>
            <person name="Suzuki O."/>
            <person name="Nakagawa S."/>
            <person name="Senoh A."/>
            <person name="Mizoguchi H."/>
            <person name="Goto Y."/>
            <person name="Shimizu F."/>
            <person name="Wakebe H."/>
            <person name="Hishigaki H."/>
            <person name="Watanabe T."/>
            <person name="Sugiyama A."/>
            <person name="Takemoto M."/>
            <person name="Kawakami B."/>
            <person name="Yamazaki M."/>
            <person name="Watanabe K."/>
            <person name="Kumagai A."/>
            <person name="Itakura S."/>
            <person name="Fukuzumi Y."/>
            <person name="Fujimori Y."/>
            <person name="Komiyama M."/>
            <person name="Tashiro H."/>
            <person name="Tanigami A."/>
            <person name="Fujiwara T."/>
            <person name="Ono T."/>
            <person name="Yamada K."/>
            <person name="Fujii Y."/>
            <person name="Ozaki K."/>
            <person name="Hirao M."/>
            <person name="Ohmori Y."/>
            <person name="Kawabata A."/>
            <person name="Hikiji T."/>
            <person name="Kobatake N."/>
            <person name="Inagaki H."/>
            <person name="Ikema Y."/>
            <person name="Okamoto S."/>
            <person name="Okitani R."/>
            <person name="Kawakami T."/>
            <person name="Noguchi S."/>
            <person name="Itoh T."/>
            <person name="Shigeta K."/>
            <person name="Senba T."/>
            <person name="Matsumura K."/>
            <person name="Nakajima Y."/>
            <person name="Mizuno T."/>
            <person name="Morinaga M."/>
            <person name="Sasaki M."/>
            <person name="Togashi T."/>
            <person name="Oyama M."/>
            <person name="Hata H."/>
            <person name="Watanabe M."/>
            <person name="Komatsu T."/>
            <person name="Mizushima-Sugano J."/>
            <person name="Satoh T."/>
            <person name="Shirai Y."/>
            <person name="Takahashi Y."/>
            <person name="Nakagawa K."/>
            <person name="Okumura K."/>
            <person name="Nagase T."/>
            <person name="Nomura N."/>
            <person name="Kikuchi H."/>
            <person name="Masuho Y."/>
            <person name="Yamashita R."/>
            <person name="Nakai K."/>
            <person name="Yada T."/>
            <person name="Nakamura Y."/>
            <person name="Ohara O."/>
            <person name="Isogai T."/>
            <person name="Sugano S."/>
        </authorList>
    </citation>
    <scope>NUCLEOTIDE SEQUENCE [LARGE SCALE MRNA] OF 87-498 (ISOFORM 1)</scope>
    <source>
        <tissue>Placenta</tissue>
    </source>
</reference>
<reference key="6">
    <citation type="submission" date="2004-06" db="EMBL/GenBank/DDBJ databases">
        <title>Cloning of human full open reading frames in Gateway(TM) system entry vector (pDONR201).</title>
        <authorList>
            <person name="Ebert L."/>
            <person name="Schick M."/>
            <person name="Neubert P."/>
            <person name="Schatten R."/>
            <person name="Henze S."/>
            <person name="Korn B."/>
        </authorList>
    </citation>
    <scope>NUCLEOTIDE SEQUENCE [LARGE SCALE MRNA] OF 89-498 (ISOFORM 1)</scope>
</reference>
<reference key="7">
    <citation type="submission" date="2005-04" db="EMBL/GenBank/DDBJ databases">
        <authorList>
            <person name="Suzuki Y."/>
            <person name="Sugano S."/>
            <person name="Totoki Y."/>
            <person name="Toyoda A."/>
            <person name="Takeda T."/>
            <person name="Sakaki Y."/>
            <person name="Tanaka A."/>
            <person name="Yokoyama S."/>
        </authorList>
    </citation>
    <scope>NUCLEOTIDE SEQUENCE [LARGE SCALE MRNA] OF 89-498 (ISOFORM 1)</scope>
    <source>
        <tissue>Artery smooth muscle</tissue>
    </source>
</reference>
<reference key="8">
    <citation type="journal article" date="2008" name="J. Proteome Res.">
        <title>Combining protein-based IMAC, peptide-based IMAC, and MudPIT for efficient phosphoproteomic analysis.</title>
        <authorList>
            <person name="Cantin G.T."/>
            <person name="Yi W."/>
            <person name="Lu B."/>
            <person name="Park S.K."/>
            <person name="Xu T."/>
            <person name="Lee J.-D."/>
            <person name="Yates J.R. III"/>
        </authorList>
    </citation>
    <scope>IDENTIFICATION BY MASS SPECTROMETRY [LARGE SCALE ANALYSIS]</scope>
    <source>
        <tissue>Cervix carcinoma</tissue>
    </source>
</reference>
<reference key="9">
    <citation type="journal article" date="2008" name="Proc. Natl. Acad. Sci. U.S.A.">
        <title>A quantitative atlas of mitotic phosphorylation.</title>
        <authorList>
            <person name="Dephoure N."/>
            <person name="Zhou C."/>
            <person name="Villen J."/>
            <person name="Beausoleil S.A."/>
            <person name="Bakalarski C.E."/>
            <person name="Elledge S.J."/>
            <person name="Gygi S.P."/>
        </authorList>
    </citation>
    <scope>PHOSPHORYLATION [LARGE SCALE ANALYSIS] AT SER-270; SER-297 AND SER-301</scope>
    <scope>IDENTIFICATION BY MASS SPECTROMETRY [LARGE SCALE ANALYSIS]</scope>
    <source>
        <tissue>Cervix carcinoma</tissue>
    </source>
</reference>
<reference key="10">
    <citation type="journal article" date="2009" name="Anal. Chem.">
        <title>Lys-N and trypsin cover complementary parts of the phosphoproteome in a refined SCX-based approach.</title>
        <authorList>
            <person name="Gauci S."/>
            <person name="Helbig A.O."/>
            <person name="Slijper M."/>
            <person name="Krijgsveld J."/>
            <person name="Heck A.J."/>
            <person name="Mohammed S."/>
        </authorList>
    </citation>
    <scope>IDENTIFICATION BY MASS SPECTROMETRY [LARGE SCALE ANALYSIS]</scope>
</reference>
<reference key="11">
    <citation type="journal article" date="2009" name="Sci. Signal.">
        <title>Quantitative phosphoproteomic analysis of T cell receptor signaling reveals system-wide modulation of protein-protein interactions.</title>
        <authorList>
            <person name="Mayya V."/>
            <person name="Lundgren D.H."/>
            <person name="Hwang S.-I."/>
            <person name="Rezaul K."/>
            <person name="Wu L."/>
            <person name="Eng J.K."/>
            <person name="Rodionov V."/>
            <person name="Han D.K."/>
        </authorList>
    </citation>
    <scope>PHOSPHORYLATION [LARGE SCALE ANALYSIS] AT SER-297; SER-301 AND SER-327</scope>
    <scope>IDENTIFICATION BY MASS SPECTROMETRY [LARGE SCALE ANALYSIS]</scope>
    <source>
        <tissue>Leukemic T-cell</tissue>
    </source>
</reference>
<reference key="12">
    <citation type="journal article" date="2010" name="Sci. Signal.">
        <title>Quantitative phosphoproteomics reveals widespread full phosphorylation site occupancy during mitosis.</title>
        <authorList>
            <person name="Olsen J.V."/>
            <person name="Vermeulen M."/>
            <person name="Santamaria A."/>
            <person name="Kumar C."/>
            <person name="Miller M.L."/>
            <person name="Jensen L.J."/>
            <person name="Gnad F."/>
            <person name="Cox J."/>
            <person name="Jensen T.S."/>
            <person name="Nigg E.A."/>
            <person name="Brunak S."/>
            <person name="Mann M."/>
        </authorList>
    </citation>
    <scope>ACETYLATION [LARGE SCALE ANALYSIS] AT ALA-2</scope>
    <scope>PHOSPHORYLATION [LARGE SCALE ANALYSIS] AT SER-12; SER-270; SER-297 AND SER-301</scope>
    <scope>CLEAVAGE OF INITIATOR METHIONINE [LARGE SCALE ANALYSIS]</scope>
    <scope>IDENTIFICATION BY MASS SPECTROMETRY [LARGE SCALE ANALYSIS]</scope>
    <source>
        <tissue>Cervix carcinoma</tissue>
    </source>
</reference>
<reference key="13">
    <citation type="journal article" date="2011" name="Sci. Signal.">
        <title>System-wide temporal characterization of the proteome and phosphoproteome of human embryonic stem cell differentiation.</title>
        <authorList>
            <person name="Rigbolt K.T."/>
            <person name="Prokhorova T.A."/>
            <person name="Akimov V."/>
            <person name="Henningsen J."/>
            <person name="Johansen P.T."/>
            <person name="Kratchmarova I."/>
            <person name="Kassem M."/>
            <person name="Mann M."/>
            <person name="Olsen J.V."/>
            <person name="Blagoev B."/>
        </authorList>
    </citation>
    <scope>PHOSPHORYLATION [LARGE SCALE ANALYSIS] AT SER-36; SER-50; SER-297; SER-301 AND SER-327</scope>
    <scope>IDENTIFICATION BY MASS SPECTROMETRY [LARGE SCALE ANALYSIS]</scope>
</reference>
<reference key="14">
    <citation type="journal article" date="2013" name="J. Proteome Res.">
        <title>Toward a comprehensive characterization of a human cancer cell phosphoproteome.</title>
        <authorList>
            <person name="Zhou H."/>
            <person name="Di Palma S."/>
            <person name="Preisinger C."/>
            <person name="Peng M."/>
            <person name="Polat A.N."/>
            <person name="Heck A.J."/>
            <person name="Mohammed S."/>
        </authorList>
    </citation>
    <scope>PHOSPHORYLATION [LARGE SCALE ANALYSIS] AT SER-270 AND SER-327</scope>
    <scope>IDENTIFICATION BY MASS SPECTROMETRY [LARGE SCALE ANALYSIS]</scope>
    <source>
        <tissue>Cervix carcinoma</tissue>
        <tissue>Erythroleukemia</tissue>
    </source>
</reference>
<reference key="15">
    <citation type="journal article" date="2014" name="J. Proteomics">
        <title>An enzyme assisted RP-RPLC approach for in-depth analysis of human liver phosphoproteome.</title>
        <authorList>
            <person name="Bian Y."/>
            <person name="Song C."/>
            <person name="Cheng K."/>
            <person name="Dong M."/>
            <person name="Wang F."/>
            <person name="Huang J."/>
            <person name="Sun D."/>
            <person name="Wang L."/>
            <person name="Ye M."/>
            <person name="Zou H."/>
        </authorList>
    </citation>
    <scope>PHOSPHORYLATION [LARGE SCALE ANALYSIS] AT SER-297 AND SER-301</scope>
    <scope>IDENTIFICATION BY MASS SPECTROMETRY [LARGE SCALE ANALYSIS]</scope>
    <source>
        <tissue>Liver</tissue>
    </source>
</reference>
<reference key="16">
    <citation type="journal article" date="2014" name="Nat. Struct. Mol. Biol.">
        <title>Uncovering global SUMOylation signaling networks in a site-specific manner.</title>
        <authorList>
            <person name="Hendriks I.A."/>
            <person name="D'Souza R.C."/>
            <person name="Yang B."/>
            <person name="Verlaan-de Vries M."/>
            <person name="Mann M."/>
            <person name="Vertegaal A.C."/>
        </authorList>
    </citation>
    <scope>SUMOYLATION [LARGE SCALE ANALYSIS] AT LYS-241</scope>
    <scope>IDENTIFICATION BY MASS SPECTROMETRY [LARGE SCALE ANALYSIS]</scope>
</reference>
<reference key="17">
    <citation type="journal article" date="2017" name="Nat. Struct. Mol. Biol.">
        <title>Site-specific mapping of the human SUMO proteome reveals co-modification with phosphorylation.</title>
        <authorList>
            <person name="Hendriks I.A."/>
            <person name="Lyon D."/>
            <person name="Young C."/>
            <person name="Jensen L.J."/>
            <person name="Vertegaal A.C."/>
            <person name="Nielsen M.L."/>
        </authorList>
    </citation>
    <scope>SUMOYLATION [LARGE SCALE ANALYSIS] AT LYS-385</scope>
    <scope>IDENTIFICATION BY MASS SPECTROMETRY [LARGE SCALE ANALYSIS]</scope>
</reference>
<feature type="initiator methionine" description="Removed" evidence="10">
    <location>
        <position position="1"/>
    </location>
</feature>
<feature type="chain" id="PRO_0000059297" description="PHD finger protein 10">
    <location>
        <begin position="2"/>
        <end position="498"/>
    </location>
</feature>
<feature type="zinc finger region" description="PHD-type 1; degenerate" evidence="3">
    <location>
        <begin position="379"/>
        <end position="436"/>
    </location>
</feature>
<feature type="zinc finger region" description="PHD-type 2; degenerate" evidence="3">
    <location>
        <begin position="438"/>
        <end position="481"/>
    </location>
</feature>
<feature type="region of interest" description="Disordered" evidence="4">
    <location>
        <begin position="1"/>
        <end position="62"/>
    </location>
</feature>
<feature type="region of interest" description="SAY">
    <location>
        <begin position="89"/>
        <end position="295"/>
    </location>
</feature>
<feature type="region of interest" description="Essential to induce neural progenitor proliferation" evidence="1">
    <location>
        <begin position="89"/>
        <end position="185"/>
    </location>
</feature>
<feature type="region of interest" description="Disordered" evidence="4">
    <location>
        <begin position="285"/>
        <end position="368"/>
    </location>
</feature>
<feature type="region of interest" description="Essential to induce neural progenitor proliferation" evidence="1">
    <location>
        <begin position="292"/>
        <end position="334"/>
    </location>
</feature>
<feature type="compositionally biased region" description="Low complexity" evidence="4">
    <location>
        <begin position="1"/>
        <end position="10"/>
    </location>
</feature>
<feature type="compositionally biased region" description="Low complexity" evidence="4">
    <location>
        <begin position="285"/>
        <end position="296"/>
    </location>
</feature>
<feature type="compositionally biased region" description="Polar residues" evidence="4">
    <location>
        <begin position="318"/>
        <end position="328"/>
    </location>
</feature>
<feature type="compositionally biased region" description="Basic and acidic residues" evidence="4">
    <location>
        <begin position="345"/>
        <end position="359"/>
    </location>
</feature>
<feature type="modified residue" description="N-acetylalanine" evidence="10">
    <location>
        <position position="2"/>
    </location>
</feature>
<feature type="modified residue" description="Phosphoserine" evidence="10">
    <location>
        <position position="12"/>
    </location>
</feature>
<feature type="modified residue" description="Phosphoserine" evidence="11">
    <location>
        <position position="36"/>
    </location>
</feature>
<feature type="modified residue" description="Phosphoserine" evidence="11">
    <location>
        <position position="50"/>
    </location>
</feature>
<feature type="modified residue" description="Phosphoserine" evidence="8 10 12">
    <location>
        <position position="270"/>
    </location>
</feature>
<feature type="modified residue" description="Phosphoserine" evidence="8 9 10 11 13">
    <location>
        <position position="297"/>
    </location>
</feature>
<feature type="modified residue" description="Phosphoserine" evidence="8 9 10 11 13">
    <location>
        <position position="301"/>
    </location>
</feature>
<feature type="modified residue" description="Phosphoserine" evidence="9 11 12">
    <location>
        <position position="327"/>
    </location>
</feature>
<feature type="modified residue" description="Phosphoserine" evidence="2">
    <location>
        <position position="331"/>
    </location>
</feature>
<feature type="cross-link" description="Glycyl lysine isopeptide (Lys-Gly) (interchain with G-Cter in SUMO2)" evidence="14">
    <location>
        <position position="241"/>
    </location>
</feature>
<feature type="cross-link" description="Glycyl lysine isopeptide (Lys-Gly) (interchain with G-Cter in SUMO2)" evidence="15">
    <location>
        <position position="385"/>
    </location>
</feature>
<feature type="splice variant" id="VSP_039090" description="In isoform 3." evidence="6">
    <location>
        <begin position="1"/>
        <end position="47"/>
    </location>
</feature>
<feature type="splice variant" id="VSP_013440" description="In isoform 2." evidence="5">
    <location>
        <begin position="109"/>
        <end position="110"/>
    </location>
</feature>
<feature type="sequence conflict" description="In Ref. 4; AAK27451." evidence="7" ref="4">
    <original>L</original>
    <variation>P</variation>
    <location>
        <position position="126"/>
    </location>
</feature>
<feature type="sequence conflict" description="In Ref. 4; AAK27451." evidence="7" ref="4">
    <original>E</original>
    <variation>G</variation>
    <location>
        <position position="246"/>
    </location>
</feature>
<feature type="sequence conflict" description="In Ref. 4; AAK27451." evidence="7" ref="4">
    <original>R</original>
    <variation>W</variation>
    <location>
        <position position="275"/>
    </location>
</feature>
<feature type="sequence conflict" description="In Ref. 4; AAK27451." evidence="7" ref="4">
    <original>PP</original>
    <variation>AT</variation>
    <location>
        <begin position="286"/>
        <end position="287"/>
    </location>
</feature>
<feature type="sequence conflict" description="In Ref. 4; AAK27451." evidence="7" ref="4">
    <original>N</original>
    <variation>K</variation>
    <location>
        <position position="325"/>
    </location>
</feature>
<feature type="sequence conflict" description="In Ref. 4; AAK27451." evidence="7" ref="4">
    <original>P</original>
    <variation>S</variation>
    <location>
        <position position="332"/>
    </location>
</feature>
<feature type="sequence conflict" description="In Ref. 4; AAK27451." evidence="7" ref="4">
    <original>G</original>
    <variation>A</variation>
    <location>
        <position position="357"/>
    </location>
</feature>
<feature type="sequence conflict" description="In Ref. 4; AAK27451." evidence="7" ref="4">
    <original>K</original>
    <variation>N</variation>
    <location>
        <position position="365"/>
    </location>
</feature>
<feature type="sequence conflict" description="In Ref. 7; BAD96332." evidence="7" ref="7">
    <original>M</original>
    <variation>T</variation>
    <location>
        <position position="422"/>
    </location>
</feature>
<feature type="helix" evidence="16">
    <location>
        <begin position="198"/>
        <end position="218"/>
    </location>
</feature>
<feature type="strand" evidence="16">
    <location>
        <begin position="223"/>
        <end position="226"/>
    </location>
</feature>
<feature type="strand" evidence="16">
    <location>
        <begin position="228"/>
        <end position="230"/>
    </location>
</feature>
<feature type="strand" evidence="16">
    <location>
        <begin position="233"/>
        <end position="236"/>
    </location>
</feature>
<feature type="helix" evidence="16">
    <location>
        <begin position="237"/>
        <end position="239"/>
    </location>
</feature>
<feature type="turn" evidence="16">
    <location>
        <begin position="245"/>
        <end position="248"/>
    </location>
</feature>
<feature type="strand" evidence="16">
    <location>
        <begin position="257"/>
        <end position="261"/>
    </location>
</feature>
<feature type="helix" evidence="16">
    <location>
        <begin position="271"/>
        <end position="276"/>
    </location>
</feature>
<feature type="strand" evidence="16">
    <location>
        <begin position="279"/>
        <end position="281"/>
    </location>
</feature>
<proteinExistence type="evidence at protein level"/>
<accession>Q8WUB8</accession>
<accession>Q2YDA3</accession>
<accession>Q53HG8</accession>
<accession>Q9BXD2</accession>
<accession>Q9NV26</accession>
<protein>
    <recommendedName>
        <fullName>PHD finger protein 10</fullName>
    </recommendedName>
    <alternativeName>
        <fullName>BRG1-associated factor 45a</fullName>
        <shortName>BAF45a</shortName>
    </alternativeName>
    <alternativeName>
        <fullName>XAP135</fullName>
    </alternativeName>
</protein>
<evidence type="ECO:0000250" key="1"/>
<evidence type="ECO:0000250" key="2">
    <source>
        <dbReference type="UniProtKB" id="Q9D8M7"/>
    </source>
</evidence>
<evidence type="ECO:0000255" key="3">
    <source>
        <dbReference type="PROSITE-ProRule" id="PRU00146"/>
    </source>
</evidence>
<evidence type="ECO:0000256" key="4">
    <source>
        <dbReference type="SAM" id="MobiDB-lite"/>
    </source>
</evidence>
<evidence type="ECO:0000303" key="5">
    <source>
    </source>
</evidence>
<evidence type="ECO:0000303" key="6">
    <source>
    </source>
</evidence>
<evidence type="ECO:0000305" key="7"/>
<evidence type="ECO:0007744" key="8">
    <source>
    </source>
</evidence>
<evidence type="ECO:0007744" key="9">
    <source>
    </source>
</evidence>
<evidence type="ECO:0007744" key="10">
    <source>
    </source>
</evidence>
<evidence type="ECO:0007744" key="11">
    <source>
    </source>
</evidence>
<evidence type="ECO:0007744" key="12">
    <source>
    </source>
</evidence>
<evidence type="ECO:0007744" key="13">
    <source>
    </source>
</evidence>
<evidence type="ECO:0007744" key="14">
    <source>
    </source>
</evidence>
<evidence type="ECO:0007744" key="15">
    <source>
    </source>
</evidence>
<evidence type="ECO:0007829" key="16">
    <source>
        <dbReference type="PDB" id="7VDV"/>
    </source>
</evidence>
<sequence>MAAAAGPGAALSPRPCDSDPATPGAQSPKDDNEDNSNDGTQPSKRRRMGSGDSSRSCETSSQDLGFSYYPAENLIEYKWPPDETGEYYMLQEQVSEYLGVTSFKRKYPDLERRDLSHKEKLYLRELNVITETQCTLGLTALRSDEVIDLMIKEYPAKHAEYSVILQEKERQRITDHYKEYSQMQQQNTQKVEASKVPEYIKKAAKKAAEFNSNLNRERMEERRAYFDLQTHVIQVPQGKYKVLPTERTKVSSYPVALIPGQFQEYYKRYSPDELRYLPLNTALYEPPLDPELPALDSDGDSDDGEDGRGDEKRKNKGTSDSSSGNVSEGESPPDSQEDSFQGRQKSKDKAATPRKDGPKRSVLSKSVPGYKPKVIPNAICGICLKGKESNKKGKAESLIHCSQCENSGHPSCLDMTMELVSMIKTYPWQCMECKTCIICGQPHHEEEMMFCDMCDRGYHTFCVGLGAIPSGRWICDCCQRAPPTPRKVGRRGKNSKEG</sequence>